<sequence>MTAERNLRKTRVGVVTSDKMDKTVVVAVETLVQHPLYKKRVRRTKKFKAHDEHNQCKVGDKVRIMETRPLSKEKRWRVVEIIESAPDYKSAPEV</sequence>
<organism>
    <name type="scientific">Symbiobacterium thermophilum (strain DSM 24528 / JCM 14929 / IAM 14863 / T)</name>
    <dbReference type="NCBI Taxonomy" id="292459"/>
    <lineage>
        <taxon>Bacteria</taxon>
        <taxon>Bacillati</taxon>
        <taxon>Bacillota</taxon>
        <taxon>Clostridia</taxon>
        <taxon>Eubacteriales</taxon>
        <taxon>Symbiobacteriaceae</taxon>
        <taxon>Symbiobacterium</taxon>
    </lineage>
</organism>
<comment type="function">
    <text evidence="1">One of the primary rRNA binding proteins, it binds specifically to the 5'-end of 16S ribosomal RNA.</text>
</comment>
<comment type="subunit">
    <text evidence="1">Part of the 30S ribosomal subunit.</text>
</comment>
<comment type="similarity">
    <text evidence="1">Belongs to the universal ribosomal protein uS17 family.</text>
</comment>
<gene>
    <name evidence="1" type="primary">rpsQ</name>
    <name type="ordered locus">STH3066</name>
</gene>
<protein>
    <recommendedName>
        <fullName evidence="1">Small ribosomal subunit protein uS17</fullName>
    </recommendedName>
    <alternativeName>
        <fullName evidence="2">30S ribosomal protein S17</fullName>
    </alternativeName>
</protein>
<dbReference type="EMBL" id="AP006840">
    <property type="protein sequence ID" value="BAD42048.1"/>
    <property type="molecule type" value="Genomic_DNA"/>
</dbReference>
<dbReference type="RefSeq" id="WP_011197181.1">
    <property type="nucleotide sequence ID" value="NC_006177.1"/>
</dbReference>
<dbReference type="SMR" id="Q67JV2"/>
<dbReference type="STRING" id="292459.STH3066"/>
<dbReference type="KEGG" id="sth:STH3066"/>
<dbReference type="eggNOG" id="COG0186">
    <property type="taxonomic scope" value="Bacteria"/>
</dbReference>
<dbReference type="HOGENOM" id="CLU_073626_1_0_9"/>
<dbReference type="OrthoDB" id="9811714at2"/>
<dbReference type="Proteomes" id="UP000000417">
    <property type="component" value="Chromosome"/>
</dbReference>
<dbReference type="GO" id="GO:0022627">
    <property type="term" value="C:cytosolic small ribosomal subunit"/>
    <property type="evidence" value="ECO:0007669"/>
    <property type="project" value="TreeGrafter"/>
</dbReference>
<dbReference type="GO" id="GO:0019843">
    <property type="term" value="F:rRNA binding"/>
    <property type="evidence" value="ECO:0007669"/>
    <property type="project" value="UniProtKB-UniRule"/>
</dbReference>
<dbReference type="GO" id="GO:0003735">
    <property type="term" value="F:structural constituent of ribosome"/>
    <property type="evidence" value="ECO:0007669"/>
    <property type="project" value="InterPro"/>
</dbReference>
<dbReference type="GO" id="GO:0006412">
    <property type="term" value="P:translation"/>
    <property type="evidence" value="ECO:0007669"/>
    <property type="project" value="UniProtKB-UniRule"/>
</dbReference>
<dbReference type="CDD" id="cd00364">
    <property type="entry name" value="Ribosomal_uS17"/>
    <property type="match status" value="1"/>
</dbReference>
<dbReference type="FunFam" id="2.40.50.140:FF:000123">
    <property type="entry name" value="30S ribosomal protein S17"/>
    <property type="match status" value="1"/>
</dbReference>
<dbReference type="Gene3D" id="2.40.50.140">
    <property type="entry name" value="Nucleic acid-binding proteins"/>
    <property type="match status" value="1"/>
</dbReference>
<dbReference type="HAMAP" id="MF_01345_B">
    <property type="entry name" value="Ribosomal_uS17_B"/>
    <property type="match status" value="1"/>
</dbReference>
<dbReference type="InterPro" id="IPR012340">
    <property type="entry name" value="NA-bd_OB-fold"/>
</dbReference>
<dbReference type="InterPro" id="IPR000266">
    <property type="entry name" value="Ribosomal_uS17"/>
</dbReference>
<dbReference type="InterPro" id="IPR019984">
    <property type="entry name" value="Ribosomal_uS17_bact/chlr"/>
</dbReference>
<dbReference type="InterPro" id="IPR019979">
    <property type="entry name" value="Ribosomal_uS17_CS"/>
</dbReference>
<dbReference type="NCBIfam" id="NF004123">
    <property type="entry name" value="PRK05610.1"/>
    <property type="match status" value="1"/>
</dbReference>
<dbReference type="NCBIfam" id="TIGR03635">
    <property type="entry name" value="uS17_bact"/>
    <property type="match status" value="1"/>
</dbReference>
<dbReference type="PANTHER" id="PTHR10744">
    <property type="entry name" value="40S RIBOSOMAL PROTEIN S11 FAMILY MEMBER"/>
    <property type="match status" value="1"/>
</dbReference>
<dbReference type="PANTHER" id="PTHR10744:SF1">
    <property type="entry name" value="SMALL RIBOSOMAL SUBUNIT PROTEIN US17M"/>
    <property type="match status" value="1"/>
</dbReference>
<dbReference type="Pfam" id="PF00366">
    <property type="entry name" value="Ribosomal_S17"/>
    <property type="match status" value="1"/>
</dbReference>
<dbReference type="PRINTS" id="PR00973">
    <property type="entry name" value="RIBOSOMALS17"/>
</dbReference>
<dbReference type="SUPFAM" id="SSF50249">
    <property type="entry name" value="Nucleic acid-binding proteins"/>
    <property type="match status" value="1"/>
</dbReference>
<dbReference type="PROSITE" id="PS00056">
    <property type="entry name" value="RIBOSOMAL_S17"/>
    <property type="match status" value="1"/>
</dbReference>
<keyword id="KW-1185">Reference proteome</keyword>
<keyword id="KW-0687">Ribonucleoprotein</keyword>
<keyword id="KW-0689">Ribosomal protein</keyword>
<keyword id="KW-0694">RNA-binding</keyword>
<keyword id="KW-0699">rRNA-binding</keyword>
<reference key="1">
    <citation type="journal article" date="2004" name="Nucleic Acids Res.">
        <title>Genome sequence of Symbiobacterium thermophilum, an uncultivable bacterium that depends on microbial commensalism.</title>
        <authorList>
            <person name="Ueda K."/>
            <person name="Yamashita A."/>
            <person name="Ishikawa J."/>
            <person name="Shimada M."/>
            <person name="Watsuji T."/>
            <person name="Morimura K."/>
            <person name="Ikeda H."/>
            <person name="Hattori M."/>
            <person name="Beppu T."/>
        </authorList>
    </citation>
    <scope>NUCLEOTIDE SEQUENCE [LARGE SCALE GENOMIC DNA]</scope>
    <source>
        <strain>DSM 24528 / JCM 14929 / IAM 14863 / T</strain>
    </source>
</reference>
<accession>Q67JV2</accession>
<evidence type="ECO:0000255" key="1">
    <source>
        <dbReference type="HAMAP-Rule" id="MF_01345"/>
    </source>
</evidence>
<evidence type="ECO:0000305" key="2"/>
<feature type="chain" id="PRO_0000233585" description="Small ribosomal subunit protein uS17">
    <location>
        <begin position="1"/>
        <end position="94"/>
    </location>
</feature>
<proteinExistence type="inferred from homology"/>
<name>RS17_SYMTH</name>